<name>EYS_PONAB</name>
<organism>
    <name type="scientific">Pongo abelii</name>
    <name type="common">Sumatran orangutan</name>
    <name type="synonym">Pongo pygmaeus abelii</name>
    <dbReference type="NCBI Taxonomy" id="9601"/>
    <lineage>
        <taxon>Eukaryota</taxon>
        <taxon>Metazoa</taxon>
        <taxon>Chordata</taxon>
        <taxon>Craniata</taxon>
        <taxon>Vertebrata</taxon>
        <taxon>Euteleostomi</taxon>
        <taxon>Mammalia</taxon>
        <taxon>Eutheria</taxon>
        <taxon>Euarchontoglires</taxon>
        <taxon>Primates</taxon>
        <taxon>Haplorrhini</taxon>
        <taxon>Catarrhini</taxon>
        <taxon>Hominidae</taxon>
        <taxon>Pongo</taxon>
    </lineage>
</organism>
<sequence length="3164" mass="350638">MTDKSIIILSLMVFHSSFINGKTCRRQSVEEWHPQPSSYVVNWTLTENICLDFYRDCWFLGVNTKIDTSGNQAVPQICPLQIQLGDILVISSEPSLQFPEINLMNVSETSFIGCVQNTTTEDQLLFGCRLKGMHTVNSKWLSVGTHYFITVMASGPSPCPLGLRLNVTVKQQFCQESLSSEFCSGHGKCLSEAWSKTYSCHCHPPFSGKYCQELDACSFKPCKNNGSCINKRENWDGQGYECVCHPPFTGKNCSEIIGQCQPHVCFHGNCSNITSNSFICECDEQFSGPFCEMSTKPCVSLLCWKRGICPNSSSAYTYECPKGSSSQNGETDVSECSLVPCQNGTDCIQISNDVMCICSPIFTDLLCKSIQTSCESFSLRNNATCKKWEKDYHCSCISGFTEKNCEKAIDHCRLLSINCLNEEWCFNIIGRFNYVCIPGCPKNPCWFLKNVYLIHQHLCYCGVTFHGICQDKGPAQFEYVWQLGFAGSEGEKCQGVIDAYFFLAANCTEDAICVNDPEDYNSSCRFPREGTKEICANGCSCLSEEDSQEYLYLCFLRWAGNMYLENTTDDQENECQHEAICKDEINRPRCSCSLSYIGRLCVVNVDYCLGNQSISVHGLCLALSHKCNCISLQRYERNICEIDTEDCKSVSCKNGTTSIHLRGYFFCKCVPGFKGTQREIDIDECASHPCKNGATCIDQPGNYFCQCVPPFKVVDGFSCLGNPGYVGIRCEQDIDDCILNACEHNSTCKDLHLSYQCVCLSGWEGNFSEQESNECKMNPCKNNSTCIDLYKSYRCECTSGWTGQNCSEEINECDSDPCMNGGLCHESTIPGQFVCLCPPLYTGRFCHQRYNPCDLLHNPCRNNSTCLALVDGNQHCICREEFEGKNCEIDVKECLFLSCQDYGDCEDMVNNFRCICRPGFSGSLCEIEINECSSEPCKNNGTCVDLTNRFFCNCEPGYHGPFCELDVNKCKISPCLDEENCVYRTDGYNCLCAPGYTGINCEINLDECLSEPCLHDGVCIDGINHYTCDCKSGFFGTHCETNANDCLSNPCLHGRCTELINEYPCSCDADGTSTQCKIKINDCTSIPCMNEGFCQKSAHGFTCICPRGYTGAYCEKSIDNCAEPEFNSVICLNGGICVDGPGHTFDCRCLPGFSGQFCEININECSSSPCLHGADCEDHINGYVCKCQPGWSGHHCEKELECIPNSCVHELCMENEPGSTCLCTPGFMTCSTGLLCGDEIRRITCLTPIFQRTDPISTQTYTVPPSETLVSSFPSIKATRIPAIMDTYPVDQGPKQTGIVKHDILPTTGLAALRISTPLESYLLEELIVTRELSAKHGLLSSADVSSSRFLNFGIHDPAQIVQDKTSVSHMPIRTSAATLGFFFPDRRARTPFIMSSVMSDFIFPTQSLLFENYQTVASSATPTTSVIRSIPGADIELNRQSLLSRGFLLTAASISATPVVSRGAQEDIEEYSADSLISRREHWRLLSPSMSPIFPAKIIISKQVTILNSSALHRFGTKAFNPSEYQAITEASSNQRLTNIKSQAADSLRELSQTCATCSMTEIKSSREFSDQVLHSKQSHFYETFWMNSAILASWCALMGAQTITSGHSFSSATEITPSVAFTEVPSLFPSKKSAKRTILSSSLEESITLSSNLDVNLCLDKTCLSIVPSQTISSDLMNSDLTSKMTTDELSVSANILKLLKIRQYGITMGPTEVLNQDSLLDMEKSKGSHTPFKLHPSDSSLDFELNLQIYPDVTLKTYSEITHANDFKNTLPPLTGSVPDFSEVTTNVAFYTVSATPALSIQTSSSMSVIRPDWPYFTDYMTSLKKEVKTSSEWSKWELQPSVQYQEFPTASWHLPFTRSLTLSSLESILAPQQLTISDFSCVRYYGDSYLEFQNVVLNPQNNISLEFQTFSSYGLLLYVKQDSNLVDGFFIQLFIENGTLKYHFYCPGEAKFKSINTTIRVDDGQKYTLLIRQELYPCKAELTILGRNTQTCESISHVLGKPLPKSGSVFIGGFPDLHGKIQMPVPVKNFTGCIEVIEINNWRSFIPSKAVKNYHINNCRSQGFMLSPTASFVDVSDVTQGVDTMWTSVSPSVAAPSVCQQDVCHNGGTCHPIFLSRGIVSFQCDCPLHFTGRFCEKDASLFFPSFNGNSYLELPFLKFVLEKEHNRTVTIYLTIKTNSLNGTILYSNGNNFGKQFLHLFLVEGRPSVKYGCGNSQNILTVSANYSINTNAFTPITIRYTTPVGSPGVVCMIEMTADGKPPVQKKDTEISQASQAYFESMFLGHIPANVQIHKKSGPVYGFRGCILDLQVNNKEFFIIDEARHGKNIENCHVPWCAHHLCRNNGTCISDNENLFCECPRLYSGKLCQFASCENNPCGNGATCVPKSGTDIVCLCPYGRSGPLCTDAINITQPRFSGTDAFGYTSFLAYSRISDISFHYEFHLKFQLANNHSALQNNLIFFTGQKGHGLNGDDFLAVGLLNGSVVYSYNLGSGIASIRSEPLNLSLGVHTVHLGKFFQEGWLKVDDHKNKSIIAPGRLAGLNVFSQFYVGGYSEYTPDLLPNGADFKNGFQGCIFTLQVRTEKDGHFRGLGNPEGHPNAGRSVGQCHASPCSLMKCGNGGTCIESGTSVYCNCTTGWKGAFCTETVSTCDPEHDPPHHCSRGATCISLPHGYTCFCPLGTTGIYCEQALILIVILEKPKPAEWKVKKEALSISDPSFRSNELSWMSFASFHVRKKTHIQLQFQPLAADGILFYAAQHLKAQSGDFLCISLVNSSVQLRYNLGDRTIILETLQKVTINGSTWHIIKAGRVGAEGYLDLDGINVTEKASTKMSSLDTNTDFYIGGVSSLNLVNPMAIENEPVGFQGCIRQVIINNQELQLTEFGAKGGSNVGDCDGTACGYNTCRNGGECTVNGTTFSCRCLPDWAGNTCNQSVYCLNNLCLHQSLCIPNQSFSYSCLCTLGWVGRYCENKTSFSTAKFMGNSYIKYIDPNYRMRNLQFTTISLNFSTTKTEGLIVWMGTAQNEENDFLAIGLHNQTLKIAVNLGERISVPMSYNNGTFCCNKWHHVVVIQNQTLIKAYVNNSLILSEDIDPHKNFVALNYDGICYLGGFEYGRKVSIVTQEIFKTNFVGKIKDVFFQDPKKIELIKLEGYNVYDGDEQNEVT</sequence>
<proteinExistence type="evidence at transcript level"/>
<feature type="signal peptide" evidence="4">
    <location>
        <begin position="1"/>
        <end position="21"/>
    </location>
</feature>
<feature type="chain" id="PRO_0000341224" description="Protein eyes shut homolog" evidence="4">
    <location>
        <begin position="22"/>
        <end position="3164"/>
    </location>
</feature>
<feature type="domain" description="EGF-like 1" evidence="5">
    <location>
        <begin position="170"/>
        <end position="212"/>
    </location>
</feature>
<feature type="domain" description="EGF-like 2" evidence="5">
    <location>
        <begin position="213"/>
        <end position="254"/>
    </location>
</feature>
<feature type="domain" description="EGF-like 3" evidence="5">
    <location>
        <begin position="256"/>
        <end position="292"/>
    </location>
</feature>
<feature type="domain" description="EGF-like 4" evidence="5">
    <location>
        <begin position="332"/>
        <end position="368"/>
    </location>
</feature>
<feature type="domain" description="EGF-like 5" evidence="5">
    <location>
        <begin position="370"/>
        <end position="406"/>
    </location>
</feature>
<feature type="domain" description="EGF-like 6" evidence="5">
    <location>
        <begin position="567"/>
        <end position="602"/>
    </location>
</feature>
<feature type="domain" description="EGF-like 7" evidence="5">
    <location>
        <begin position="643"/>
        <end position="679"/>
    </location>
</feature>
<feature type="domain" description="EGF-like 8; calcium-binding" evidence="5">
    <location>
        <begin position="681"/>
        <end position="720"/>
    </location>
</feature>
<feature type="domain" description="EGF-like 9; calcium-binding" evidence="5">
    <location>
        <begin position="733"/>
        <end position="769"/>
    </location>
</feature>
<feature type="domain" description="EGF-like 10; calcium-binding" evidence="5">
    <location>
        <begin position="771"/>
        <end position="807"/>
    </location>
</feature>
<feature type="domain" description="EGF-like 11" evidence="5">
    <location>
        <begin position="809"/>
        <end position="847"/>
    </location>
</feature>
<feature type="domain" description="EGF-like 12" evidence="5">
    <location>
        <begin position="849"/>
        <end position="888"/>
    </location>
</feature>
<feature type="domain" description="EGF-like 13" evidence="5">
    <location>
        <begin position="890"/>
        <end position="926"/>
    </location>
</feature>
<feature type="domain" description="EGF-like 14; calcium-binding" evidence="5">
    <location>
        <begin position="928"/>
        <end position="964"/>
    </location>
</feature>
<feature type="domain" description="EGF-like 15" evidence="5">
    <location>
        <begin position="966"/>
        <end position="1002"/>
    </location>
</feature>
<feature type="domain" description="EGF-like 16; calcium-binding" evidence="5">
    <location>
        <begin position="1004"/>
        <end position="1040"/>
    </location>
</feature>
<feature type="domain" description="EGF-like 17" evidence="5">
    <location>
        <begin position="1042"/>
        <end position="1077"/>
    </location>
</feature>
<feature type="domain" description="EGF-like 18" evidence="5">
    <location>
        <begin position="1079"/>
        <end position="1115"/>
    </location>
</feature>
<feature type="domain" description="EGF-like 19" evidence="5">
    <location>
        <begin position="1117"/>
        <end position="1159"/>
    </location>
</feature>
<feature type="domain" description="EGF-like 20; calcium-binding" evidence="5">
    <location>
        <begin position="1161"/>
        <end position="1197"/>
    </location>
</feature>
<feature type="domain" description="Laminin G-like 1" evidence="6">
    <location>
        <begin position="1883"/>
        <end position="2063"/>
    </location>
</feature>
<feature type="domain" description="EGF-like 21" evidence="5">
    <location>
        <begin position="2099"/>
        <end position="2140"/>
    </location>
</feature>
<feature type="domain" description="Laminin G-like 2" evidence="6">
    <location>
        <begin position="2145"/>
        <end position="2339"/>
    </location>
</feature>
<feature type="domain" description="EGF-like 22" evidence="5">
    <location>
        <begin position="2335"/>
        <end position="2368"/>
    </location>
</feature>
<feature type="domain" description="EGF-like 23" evidence="5">
    <location>
        <begin position="2371"/>
        <end position="2408"/>
    </location>
</feature>
<feature type="domain" description="Laminin G-like 3" evidence="6">
    <location>
        <begin position="2419"/>
        <end position="2609"/>
    </location>
</feature>
<feature type="domain" description="EGF-like 24" evidence="5">
    <location>
        <begin position="2610"/>
        <end position="2646"/>
    </location>
</feature>
<feature type="domain" description="EGF-like 25" evidence="5">
    <location>
        <begin position="2648"/>
        <end position="2689"/>
    </location>
</feature>
<feature type="domain" description="Laminin G-like 4" evidence="6">
    <location>
        <begin position="2717"/>
        <end position="2895"/>
    </location>
</feature>
<feature type="domain" description="EGF-like 26" evidence="5">
    <location>
        <begin position="2896"/>
        <end position="2932"/>
    </location>
</feature>
<feature type="domain" description="EGF-like 27" evidence="5">
    <location>
        <begin position="2933"/>
        <end position="2970"/>
    </location>
</feature>
<feature type="domain" description="Laminin G-like 5" evidence="6">
    <location>
        <begin position="2975"/>
        <end position="3164"/>
    </location>
</feature>
<feature type="glycosylation site" description="N-linked (GlcNAc...) asparagine" evidence="4">
    <location>
        <position position="42"/>
    </location>
</feature>
<feature type="glycosylation site" description="N-linked (GlcNAc...) asparagine" evidence="4">
    <location>
        <position position="105"/>
    </location>
</feature>
<feature type="glycosylation site" description="N-linked (GlcNAc...) asparagine" evidence="4">
    <location>
        <position position="117"/>
    </location>
</feature>
<feature type="glycosylation site" description="N-linked (GlcNAc...) asparagine" evidence="4">
    <location>
        <position position="166"/>
    </location>
</feature>
<feature type="glycosylation site" description="N-linked (GlcNAc...) asparagine" evidence="4">
    <location>
        <position position="225"/>
    </location>
</feature>
<feature type="glycosylation site" description="N-linked (GlcNAc...) asparagine" evidence="4">
    <location>
        <position position="252"/>
    </location>
</feature>
<feature type="glycosylation site" description="N-linked (GlcNAc...) asparagine" evidence="4">
    <location>
        <position position="269"/>
    </location>
</feature>
<feature type="glycosylation site" description="N-linked (GlcNAc...) asparagine" evidence="4">
    <location>
        <position position="272"/>
    </location>
</feature>
<feature type="glycosylation site" description="N-linked (GlcNAc...) asparagine" evidence="4">
    <location>
        <position position="311"/>
    </location>
</feature>
<feature type="glycosylation site" description="N-linked (GlcNAc...) asparagine" evidence="4">
    <location>
        <position position="343"/>
    </location>
</feature>
<feature type="glycosylation site" description="N-linked (GlcNAc...) asparagine" evidence="4">
    <location>
        <position position="382"/>
    </location>
</feature>
<feature type="glycosylation site" description="N-linked (GlcNAc...) asparagine" evidence="4">
    <location>
        <position position="506"/>
    </location>
</feature>
<feature type="glycosylation site" description="N-linked (GlcNAc...) asparagine" evidence="4">
    <location>
        <position position="521"/>
    </location>
</feature>
<feature type="glycosylation site" description="N-linked (GlcNAc...) asparagine" evidence="4">
    <location>
        <position position="566"/>
    </location>
</feature>
<feature type="glycosylation site" description="N-linked (GlcNAc...) asparagine" evidence="4">
    <location>
        <position position="611"/>
    </location>
</feature>
<feature type="glycosylation site" description="N-linked (GlcNAc...) asparagine" evidence="4">
    <location>
        <position position="654"/>
    </location>
</feature>
<feature type="glycosylation site" description="N-linked (GlcNAc...) asparagine" evidence="4">
    <location>
        <position position="745"/>
    </location>
</feature>
<feature type="glycosylation site" description="N-linked (GlcNAc...) asparagine" evidence="4">
    <location>
        <position position="766"/>
    </location>
</feature>
<feature type="glycosylation site" description="N-linked (GlcNAc...) asparagine" evidence="4">
    <location>
        <position position="782"/>
    </location>
</feature>
<feature type="glycosylation site" description="N-linked (GlcNAc...) asparagine" evidence="4">
    <location>
        <position position="783"/>
    </location>
</feature>
<feature type="glycosylation site" description="N-linked (GlcNAc...) asparagine" evidence="4">
    <location>
        <position position="805"/>
    </location>
</feature>
<feature type="glycosylation site" description="N-linked (GlcNAc...) asparagine" evidence="4">
    <location>
        <position position="862"/>
    </location>
</feature>
<feature type="glycosylation site" description="N-linked (GlcNAc...) asparagine" evidence="4">
    <location>
        <position position="863"/>
    </location>
</feature>
<feature type="glycosylation site" description="N-linked (GlcNAc...) asparagine" evidence="4">
    <location>
        <position position="940"/>
    </location>
</feature>
<feature type="glycosylation site" description="N-linked (GlcNAc...) asparagine" evidence="4">
    <location>
        <position position="1509"/>
    </location>
</feature>
<feature type="glycosylation site" description="N-linked (GlcNAc...) asparagine" evidence="4">
    <location>
        <position position="1522"/>
    </location>
</feature>
<feature type="glycosylation site" description="N-linked (GlcNAc...) asparagine" evidence="4">
    <location>
        <position position="1906"/>
    </location>
</feature>
<feature type="glycosylation site" description="N-linked (GlcNAc...) asparagine" evidence="4">
    <location>
        <position position="1941"/>
    </location>
</feature>
<feature type="glycosylation site" description="N-linked (GlcNAc...) asparagine" evidence="4">
    <location>
        <position position="1960"/>
    </location>
</feature>
<feature type="glycosylation site" description="N-linked (GlcNAc...) asparagine" evidence="4">
    <location>
        <position position="2033"/>
    </location>
</feature>
<feature type="glycosylation site" description="N-linked (GlcNAc...) asparagine" evidence="4">
    <location>
        <position position="2170"/>
    </location>
</feature>
<feature type="glycosylation site" description="N-linked (GlcNAc...) asparagine" evidence="4">
    <location>
        <position position="2185"/>
    </location>
</feature>
<feature type="glycosylation site" description="N-linked (GlcNAc...) asparagine" evidence="4">
    <location>
        <position position="2228"/>
    </location>
</feature>
<feature type="glycosylation site" description="N-linked (GlcNAc...) asparagine" evidence="4">
    <location>
        <position position="2347"/>
    </location>
</feature>
<feature type="glycosylation site" description="N-linked (GlcNAc...) asparagine" evidence="4">
    <location>
        <position position="2412"/>
    </location>
</feature>
<feature type="glycosylation site" description="N-linked (GlcNAc...) asparagine" evidence="4">
    <location>
        <position position="2453"/>
    </location>
</feature>
<feature type="glycosylation site" description="N-linked (GlcNAc...) asparagine" evidence="4">
    <location>
        <position position="2484"/>
    </location>
</feature>
<feature type="glycosylation site" description="N-linked (GlcNAc...) asparagine" evidence="4">
    <location>
        <position position="2506"/>
    </location>
</feature>
<feature type="glycosylation site" description="N-linked (GlcNAc...) asparagine" evidence="4">
    <location>
        <position position="2532"/>
    </location>
</feature>
<feature type="glycosylation site" description="N-linked (GlcNAc...) asparagine" evidence="4">
    <location>
        <position position="2635"/>
    </location>
</feature>
<feature type="glycosylation site" description="N-linked (GlcNAc...) asparagine" evidence="4">
    <location>
        <position position="2775"/>
    </location>
</feature>
<feature type="glycosylation site" description="N-linked (GlcNAc...) asparagine" evidence="4">
    <location>
        <position position="2800"/>
    </location>
</feature>
<feature type="glycosylation site" description="N-linked (GlcNAc...) asparagine" evidence="4">
    <location>
        <position position="2824"/>
    </location>
</feature>
<feature type="glycosylation site" description="N-linked (GlcNAc...) asparagine" evidence="4">
    <location>
        <position position="2914"/>
    </location>
</feature>
<feature type="glycosylation site" description="N-linked (GlcNAc...) asparagine" evidence="4">
    <location>
        <position position="2932"/>
    </location>
</feature>
<feature type="glycosylation site" description="N-linked (GlcNAc...) asparagine" evidence="4">
    <location>
        <position position="2951"/>
    </location>
</feature>
<feature type="glycosylation site" description="N-linked (GlcNAc...) asparagine" evidence="4">
    <location>
        <position position="2971"/>
    </location>
</feature>
<feature type="glycosylation site" description="N-linked (GlcNAc...) asparagine" evidence="4">
    <location>
        <position position="3006"/>
    </location>
</feature>
<feature type="glycosylation site" description="N-linked (GlcNAc...) asparagine" evidence="4">
    <location>
        <position position="3036"/>
    </location>
</feature>
<feature type="glycosylation site" description="N-linked (GlcNAc...) asparagine" evidence="4">
    <location>
        <position position="3057"/>
    </location>
</feature>
<feature type="glycosylation site" description="N-linked (GlcNAc...) asparagine" evidence="4">
    <location>
        <position position="3073"/>
    </location>
</feature>
<feature type="glycosylation site" description="N-linked (GlcNAc...) asparagine" evidence="4">
    <location>
        <position position="3082"/>
    </location>
</feature>
<feature type="disulfide bond" evidence="5">
    <location>
        <begin position="174"/>
        <end position="189"/>
    </location>
</feature>
<feature type="disulfide bond" evidence="5">
    <location>
        <begin position="183"/>
        <end position="200"/>
    </location>
</feature>
<feature type="disulfide bond" evidence="5">
    <location>
        <begin position="202"/>
        <end position="211"/>
    </location>
</feature>
<feature type="disulfide bond" evidence="5">
    <location>
        <begin position="217"/>
        <end position="228"/>
    </location>
</feature>
<feature type="disulfide bond" evidence="5">
    <location>
        <begin position="222"/>
        <end position="242"/>
    </location>
</feature>
<feature type="disulfide bond" evidence="5">
    <location>
        <begin position="244"/>
        <end position="253"/>
    </location>
</feature>
<feature type="disulfide bond" evidence="5">
    <location>
        <begin position="260"/>
        <end position="270"/>
    </location>
</feature>
<feature type="disulfide bond" evidence="5">
    <location>
        <begin position="265"/>
        <end position="280"/>
    </location>
</feature>
<feature type="disulfide bond" evidence="5">
    <location>
        <begin position="282"/>
        <end position="291"/>
    </location>
</feature>
<feature type="disulfide bond" evidence="5">
    <location>
        <begin position="336"/>
        <end position="347"/>
    </location>
</feature>
<feature type="disulfide bond" evidence="5">
    <location>
        <begin position="341"/>
        <end position="356"/>
    </location>
</feature>
<feature type="disulfide bond" evidence="5">
    <location>
        <begin position="358"/>
        <end position="367"/>
    </location>
</feature>
<feature type="disulfide bond" evidence="5">
    <location>
        <begin position="374"/>
        <end position="385"/>
    </location>
</feature>
<feature type="disulfide bond" evidence="5">
    <location>
        <begin position="396"/>
        <end position="405"/>
    </location>
</feature>
<feature type="disulfide bond" evidence="5">
    <location>
        <begin position="575"/>
        <end position="590"/>
    </location>
</feature>
<feature type="disulfide bond" evidence="5">
    <location>
        <begin position="592"/>
        <end position="601"/>
    </location>
</feature>
<feature type="disulfide bond" evidence="5">
    <location>
        <begin position="652"/>
        <end position="667"/>
    </location>
</feature>
<feature type="disulfide bond" evidence="5">
    <location>
        <begin position="685"/>
        <end position="696"/>
    </location>
</feature>
<feature type="disulfide bond" evidence="5">
    <location>
        <begin position="690"/>
        <end position="705"/>
    </location>
</feature>
<feature type="disulfide bond" evidence="5">
    <location>
        <begin position="707"/>
        <end position="719"/>
    </location>
</feature>
<feature type="disulfide bond" evidence="5">
    <location>
        <begin position="737"/>
        <end position="748"/>
    </location>
</feature>
<feature type="disulfide bond" evidence="5">
    <location>
        <begin position="742"/>
        <end position="757"/>
    </location>
</feature>
<feature type="disulfide bond" evidence="5">
    <location>
        <begin position="775"/>
        <end position="786"/>
    </location>
</feature>
<feature type="disulfide bond" evidence="5">
    <location>
        <begin position="780"/>
        <end position="795"/>
    </location>
</feature>
<feature type="disulfide bond" evidence="5">
    <location>
        <begin position="797"/>
        <end position="806"/>
    </location>
</feature>
<feature type="disulfide bond" evidence="5">
    <location>
        <begin position="813"/>
        <end position="824"/>
    </location>
</feature>
<feature type="disulfide bond" evidence="5">
    <location>
        <begin position="818"/>
        <end position="835"/>
    </location>
</feature>
<feature type="disulfide bond" evidence="5">
    <location>
        <begin position="837"/>
        <end position="846"/>
    </location>
</feature>
<feature type="disulfide bond" evidence="5">
    <location>
        <begin position="853"/>
        <end position="866"/>
    </location>
</feature>
<feature type="disulfide bond" evidence="5">
    <location>
        <begin position="860"/>
        <end position="876"/>
    </location>
</feature>
<feature type="disulfide bond" evidence="5">
    <location>
        <begin position="878"/>
        <end position="887"/>
    </location>
</feature>
<feature type="disulfide bond" evidence="5">
    <location>
        <begin position="894"/>
        <end position="905"/>
    </location>
</feature>
<feature type="disulfide bond" evidence="5">
    <location>
        <begin position="899"/>
        <end position="914"/>
    </location>
</feature>
<feature type="disulfide bond" evidence="5">
    <location>
        <begin position="916"/>
        <end position="925"/>
    </location>
</feature>
<feature type="disulfide bond" evidence="5">
    <location>
        <begin position="932"/>
        <end position="943"/>
    </location>
</feature>
<feature type="disulfide bond" evidence="5">
    <location>
        <begin position="937"/>
        <end position="952"/>
    </location>
</feature>
<feature type="disulfide bond" evidence="5">
    <location>
        <begin position="954"/>
        <end position="963"/>
    </location>
</feature>
<feature type="disulfide bond" evidence="5">
    <location>
        <begin position="970"/>
        <end position="981"/>
    </location>
</feature>
<feature type="disulfide bond" evidence="5">
    <location>
        <begin position="975"/>
        <end position="990"/>
    </location>
</feature>
<feature type="disulfide bond" evidence="5">
    <location>
        <begin position="992"/>
        <end position="1001"/>
    </location>
</feature>
<feature type="disulfide bond" evidence="5">
    <location>
        <begin position="1008"/>
        <end position="1019"/>
    </location>
</feature>
<feature type="disulfide bond" evidence="5">
    <location>
        <begin position="1013"/>
        <end position="1028"/>
    </location>
</feature>
<feature type="disulfide bond" evidence="5">
    <location>
        <begin position="1030"/>
        <end position="1039"/>
    </location>
</feature>
<feature type="disulfide bond" evidence="5">
    <location>
        <begin position="1046"/>
        <end position="1056"/>
    </location>
</feature>
<feature type="disulfide bond" evidence="5">
    <location>
        <begin position="1051"/>
        <end position="1065"/>
    </location>
</feature>
<feature type="disulfide bond" evidence="5">
    <location>
        <begin position="1067"/>
        <end position="1076"/>
    </location>
</feature>
<feature type="disulfide bond" evidence="5">
    <location>
        <begin position="1083"/>
        <end position="1094"/>
    </location>
</feature>
<feature type="disulfide bond" evidence="5">
    <location>
        <begin position="1088"/>
        <end position="1103"/>
    </location>
</feature>
<feature type="disulfide bond" evidence="5">
    <location>
        <begin position="1105"/>
        <end position="1114"/>
    </location>
</feature>
<feature type="disulfide bond" evidence="5">
    <location>
        <begin position="1121"/>
        <end position="1137"/>
    </location>
</feature>
<feature type="disulfide bond" evidence="5">
    <location>
        <begin position="1131"/>
        <end position="1147"/>
    </location>
</feature>
<feature type="disulfide bond" evidence="5">
    <location>
        <begin position="1149"/>
        <end position="1158"/>
    </location>
</feature>
<feature type="disulfide bond" evidence="5">
    <location>
        <begin position="1165"/>
        <end position="1176"/>
    </location>
</feature>
<feature type="disulfide bond" evidence="5">
    <location>
        <begin position="1170"/>
        <end position="1185"/>
    </location>
</feature>
<feature type="disulfide bond" evidence="5">
    <location>
        <begin position="1187"/>
        <end position="1196"/>
    </location>
</feature>
<feature type="disulfide bond" evidence="6">
    <location>
        <begin position="2037"/>
        <end position="2063"/>
    </location>
</feature>
<feature type="disulfide bond" evidence="5">
    <location>
        <begin position="2103"/>
        <end position="2114"/>
    </location>
</feature>
<feature type="disulfide bond" evidence="5">
    <location>
        <begin position="2108"/>
        <end position="2128"/>
    </location>
</feature>
<feature type="disulfide bond" evidence="5">
    <location>
        <begin position="2130"/>
        <end position="2139"/>
    </location>
</feature>
<feature type="disulfide bond" evidence="6">
    <location>
        <begin position="2308"/>
        <end position="2339"/>
    </location>
</feature>
<feature type="disulfide bond" evidence="5">
    <location>
        <begin position="2339"/>
        <end position="2350"/>
    </location>
</feature>
<feature type="disulfide bond" evidence="5">
    <location>
        <begin position="2344"/>
        <end position="2359"/>
    </location>
</feature>
<feature type="disulfide bond" evidence="5">
    <location>
        <begin position="2375"/>
        <end position="2386"/>
    </location>
</feature>
<feature type="disulfide bond" evidence="5">
    <location>
        <begin position="2380"/>
        <end position="2396"/>
    </location>
</feature>
<feature type="disulfide bond" evidence="5">
    <location>
        <begin position="2398"/>
        <end position="2407"/>
    </location>
</feature>
<feature type="disulfide bond" evidence="6">
    <location>
        <begin position="2576"/>
        <end position="2609"/>
    </location>
</feature>
<feature type="disulfide bond" evidence="5">
    <location>
        <begin position="2614"/>
        <end position="2625"/>
    </location>
</feature>
<feature type="disulfide bond" evidence="5">
    <location>
        <begin position="2619"/>
        <end position="2634"/>
    </location>
</feature>
<feature type="disulfide bond" evidence="5">
    <location>
        <begin position="2636"/>
        <end position="2645"/>
    </location>
</feature>
<feature type="disulfide bond" evidence="5">
    <location>
        <begin position="2652"/>
        <end position="2668"/>
    </location>
</feature>
<feature type="disulfide bond" evidence="5">
    <location>
        <begin position="2662"/>
        <end position="2677"/>
    </location>
</feature>
<feature type="disulfide bond" evidence="5">
    <location>
        <begin position="2679"/>
        <end position="2688"/>
    </location>
</feature>
<feature type="disulfide bond" evidence="6">
    <location>
        <begin position="2868"/>
        <end position="2895"/>
    </location>
</feature>
<feature type="disulfide bond" evidence="5">
    <location>
        <begin position="2900"/>
        <end position="2911"/>
    </location>
</feature>
<feature type="disulfide bond" evidence="5">
    <location>
        <begin position="2905"/>
        <end position="2920"/>
    </location>
</feature>
<feature type="disulfide bond" evidence="5">
    <location>
        <begin position="2922"/>
        <end position="2931"/>
    </location>
</feature>
<feature type="disulfide bond" evidence="5">
    <location>
        <begin position="2937"/>
        <end position="2948"/>
    </location>
</feature>
<feature type="disulfide bond" evidence="5">
    <location>
        <begin position="2942"/>
        <end position="2958"/>
    </location>
</feature>
<feature type="disulfide bond" evidence="5">
    <location>
        <begin position="2960"/>
        <end position="2969"/>
    </location>
</feature>
<feature type="splice variant" id="VSP_060083" description="In isoform 2.">
    <original>ALILIVILEKP</original>
    <variation>GHQFIGKDVFK</variation>
    <location>
        <begin position="2691"/>
        <end position="2701"/>
    </location>
</feature>
<feature type="splice variant" id="VSP_060084" description="In isoform 2.">
    <location>
        <begin position="2702"/>
        <end position="3164"/>
    </location>
</feature>
<protein>
    <recommendedName>
        <fullName>Protein eyes shut homolog</fullName>
    </recommendedName>
    <alternativeName>
        <fullName>Epidermal growth factor-like protein 10</fullName>
        <shortName>EGF-like protein 10</shortName>
    </alternativeName>
    <alternativeName>
        <fullName>Epidermal growth factor-like protein 11</fullName>
        <shortName>EGF-like protein 11</shortName>
    </alternativeName>
    <alternativeName>
        <fullName>Protein spacemaker homolog</fullName>
    </alternativeName>
</protein>
<accession>Q5R6R1</accession>
<accession>A0A2J8XWZ5</accession>
<keyword id="KW-0025">Alternative splicing</keyword>
<keyword id="KW-0106">Calcium</keyword>
<keyword id="KW-0966">Cell projection</keyword>
<keyword id="KW-0963">Cytoplasm</keyword>
<keyword id="KW-0206">Cytoskeleton</keyword>
<keyword id="KW-1015">Disulfide bond</keyword>
<keyword id="KW-0245">EGF-like domain</keyword>
<keyword id="KW-0272">Extracellular matrix</keyword>
<keyword id="KW-0325">Glycoprotein</keyword>
<keyword id="KW-1185">Reference proteome</keyword>
<keyword id="KW-0677">Repeat</keyword>
<keyword id="KW-0964">Secreted</keyword>
<keyword id="KW-0716">Sensory transduction</keyword>
<keyword id="KW-0732">Signal</keyword>
<keyword id="KW-0844">Vision</keyword>
<reference key="1">
    <citation type="submission" date="2017-12" db="EMBL/GenBank/DDBJ databases">
        <title>High-resolution comparative analysis of great ape genomes.</title>
        <authorList>
            <person name="Pollen A."/>
            <person name="Hastie A."/>
            <person name="Hormozdiari F."/>
            <person name="Dougherty M."/>
            <person name="Liu R."/>
            <person name="Chaisson M."/>
            <person name="Hoppe E."/>
            <person name="Hill C."/>
            <person name="Pang A."/>
            <person name="Hillier L."/>
            <person name="Baker C."/>
            <person name="Armstrong J."/>
            <person name="Shendure J."/>
            <person name="Paten B."/>
            <person name="Wilson R."/>
            <person name="Chao H."/>
            <person name="Schneider V."/>
            <person name="Ventura M."/>
            <person name="Kronenberg Z."/>
            <person name="Murali S."/>
            <person name="Gordon D."/>
            <person name="Cantsilieris S."/>
            <person name="Munson K."/>
            <person name="Nelson B."/>
            <person name="Raja A."/>
            <person name="Underwood J."/>
            <person name="Diekhans M."/>
            <person name="Fiddes I."/>
            <person name="Haussler D."/>
            <person name="Eichler E."/>
        </authorList>
    </citation>
    <scope>NUCLEOTIDE SEQUENCE [LARGE SCALE GENOMIC DNA]</scope>
    <source>
        <strain>Susie</strain>
    </source>
</reference>
<reference key="2">
    <citation type="submission" date="2004-11" db="EMBL/GenBank/DDBJ databases">
        <authorList>
            <consortium name="The German cDNA consortium"/>
        </authorList>
    </citation>
    <scope>NUCLEOTIDE SEQUENCE [LARGE SCALE MRNA] OF 2230-3164 (ISOFORM 2)</scope>
    <source>
        <tissue>Brain cortex</tissue>
    </source>
</reference>
<comment type="function">
    <text evidence="2 3">Required to maintain the integrity of photoreceptor cells (By similarity). Specifically required for normal morphology of the photoreceptor ciliary pocket, and might thus facilitate protein trafficking between the photoreceptor inner and outer segments via the transition zone (By similarity).</text>
</comment>
<comment type="subcellular location">
    <subcellularLocation>
        <location evidence="3">Cell projection</location>
        <location evidence="3">Cilium</location>
        <location evidence="3">Photoreceptor outer segment</location>
    </subcellularLocation>
    <subcellularLocation>
        <location evidence="3">Cell projection</location>
        <location evidence="3">Cilium</location>
    </subcellularLocation>
    <subcellularLocation>
        <location evidence="1">Cytoplasm</location>
        <location evidence="1">Cytoskeleton</location>
        <location evidence="1">Cilium axoneme</location>
    </subcellularLocation>
    <subcellularLocation>
        <location evidence="3">Cytoplasm</location>
        <location evidence="3">Cytoskeleton</location>
        <location evidence="3">Microtubule organizing center</location>
        <location evidence="3">Centrosome</location>
    </subcellularLocation>
    <subcellularLocation>
        <location evidence="3">Secreted</location>
        <location evidence="3">Extracellular space</location>
        <location evidence="3">Extracellular matrix</location>
        <location evidence="3">Interphotoreceptor matrix</location>
    </subcellularLocation>
    <text evidence="1 3">Localizes to discrete puncta at, or adjacent to, the photoreceptor connecting cilium. Highly expressed in cone photoreceptor outer segments (By similarity). Weakly expressed in rod photoreceptor outer segments (By similarity). May localize to the cilium axoneme (By similarity). May also be secreted into the interphotoreceptor extracellular matrix (By similarity).</text>
</comment>
<comment type="alternative products">
    <event type="alternative splicing"/>
    <isoform>
        <id>Q5R6R1-1</id>
        <name>1</name>
        <sequence type="displayed"/>
    </isoform>
    <isoform>
        <id>Q5R6R1-2</id>
        <name>2</name>
        <sequence type="described" ref="VSP_060083 VSP_060084"/>
    </isoform>
</comment>
<comment type="similarity">
    <text evidence="7">Belongs to the EYS family.</text>
</comment>
<comment type="sequence caution" evidence="7">
    <conflict type="erroneous initiation">
        <sequence resource="EMBL-CDS" id="CAH92549"/>
    </conflict>
    <text>Truncated N-terminus.</text>
</comment>
<evidence type="ECO:0000250" key="1">
    <source>
        <dbReference type="UniProtKB" id="A0A2K5V015"/>
    </source>
</evidence>
<evidence type="ECO:0000250" key="2">
    <source>
        <dbReference type="UniProtKB" id="B8JI71"/>
    </source>
</evidence>
<evidence type="ECO:0000250" key="3">
    <source>
        <dbReference type="UniProtKB" id="Q5T1H1"/>
    </source>
</evidence>
<evidence type="ECO:0000255" key="4"/>
<evidence type="ECO:0000255" key="5">
    <source>
        <dbReference type="PROSITE-ProRule" id="PRU00076"/>
    </source>
</evidence>
<evidence type="ECO:0000255" key="6">
    <source>
        <dbReference type="PROSITE-ProRule" id="PRU00122"/>
    </source>
</evidence>
<evidence type="ECO:0000305" key="7"/>
<dbReference type="EMBL" id="NDHI03003297">
    <property type="protein sequence ID" value="PNJ86529.1"/>
    <property type="molecule type" value="Genomic_DNA"/>
</dbReference>
<dbReference type="EMBL" id="CR860424">
    <property type="protein sequence ID" value="CAH92549.1"/>
    <property type="status" value="ALT_INIT"/>
    <property type="molecule type" value="mRNA"/>
</dbReference>
<dbReference type="RefSeq" id="NP_001126492.1">
    <property type="nucleotide sequence ID" value="NM_001133020.1"/>
</dbReference>
<dbReference type="SMR" id="Q5R6R1"/>
<dbReference type="FunCoup" id="Q5R6R1">
    <property type="interactions" value="59"/>
</dbReference>
<dbReference type="STRING" id="9601.ENSPPYP00000018744"/>
<dbReference type="GlyCosmos" id="Q5R6R1">
    <property type="glycosylation" value="52 sites, No reported glycans"/>
</dbReference>
<dbReference type="Ensembl" id="ENSPPYT00000019479.3">
    <molecule id="Q5R6R1-2"/>
    <property type="protein sequence ID" value="ENSPPYP00000018737.3"/>
    <property type="gene ID" value="ENSPPYG00000016753.2"/>
</dbReference>
<dbReference type="Ensembl" id="ENSPPYT00000041207.1">
    <molecule id="Q5R6R1-1"/>
    <property type="protein sequence ID" value="ENSPPYP00000041122.1"/>
    <property type="gene ID" value="ENSPPYG00000016753.2"/>
</dbReference>
<dbReference type="eggNOG" id="KOG3509">
    <property type="taxonomic scope" value="Eukaryota"/>
</dbReference>
<dbReference type="GeneTree" id="ENSGT00940000163729"/>
<dbReference type="InParanoid" id="Q5R6R1"/>
<dbReference type="OMA" id="FYCEIAL"/>
<dbReference type="Proteomes" id="UP000001595">
    <property type="component" value="Chromosome 6"/>
</dbReference>
<dbReference type="GO" id="GO:0005813">
    <property type="term" value="C:centrosome"/>
    <property type="evidence" value="ECO:0007669"/>
    <property type="project" value="UniProtKB-SubCell"/>
</dbReference>
<dbReference type="GO" id="GO:0005737">
    <property type="term" value="C:cytoplasm"/>
    <property type="evidence" value="ECO:0007669"/>
    <property type="project" value="UniProtKB-KW"/>
</dbReference>
<dbReference type="GO" id="GO:0005576">
    <property type="term" value="C:extracellular region"/>
    <property type="evidence" value="ECO:0007669"/>
    <property type="project" value="UniProtKB-KW"/>
</dbReference>
<dbReference type="GO" id="GO:0033165">
    <property type="term" value="C:interphotoreceptor matrix"/>
    <property type="evidence" value="ECO:0007669"/>
    <property type="project" value="UniProtKB-SubCell"/>
</dbReference>
<dbReference type="GO" id="GO:0001750">
    <property type="term" value="C:photoreceptor outer segment"/>
    <property type="evidence" value="ECO:0007669"/>
    <property type="project" value="UniProtKB-SubCell"/>
</dbReference>
<dbReference type="GO" id="GO:0005886">
    <property type="term" value="C:plasma membrane"/>
    <property type="evidence" value="ECO:0007669"/>
    <property type="project" value="UniProtKB-ARBA"/>
</dbReference>
<dbReference type="GO" id="GO:0032991">
    <property type="term" value="C:protein-containing complex"/>
    <property type="evidence" value="ECO:0007669"/>
    <property type="project" value="TreeGrafter"/>
</dbReference>
<dbReference type="GO" id="GO:0005509">
    <property type="term" value="F:calcium ion binding"/>
    <property type="evidence" value="ECO:0007669"/>
    <property type="project" value="InterPro"/>
</dbReference>
<dbReference type="GO" id="GO:0050908">
    <property type="term" value="P:detection of light stimulus involved in visual perception"/>
    <property type="evidence" value="ECO:0007669"/>
    <property type="project" value="Ensembl"/>
</dbReference>
<dbReference type="GO" id="GO:0045197">
    <property type="term" value="P:establishment or maintenance of epithelial cell apical/basal polarity"/>
    <property type="evidence" value="ECO:0007669"/>
    <property type="project" value="TreeGrafter"/>
</dbReference>
<dbReference type="GO" id="GO:0007157">
    <property type="term" value="P:heterophilic cell-cell adhesion via plasma membrane cell adhesion molecules"/>
    <property type="evidence" value="ECO:0007669"/>
    <property type="project" value="TreeGrafter"/>
</dbReference>
<dbReference type="GO" id="GO:0043403">
    <property type="term" value="P:skeletal muscle tissue regeneration"/>
    <property type="evidence" value="ECO:0007669"/>
    <property type="project" value="Ensembl"/>
</dbReference>
<dbReference type="CDD" id="cd00054">
    <property type="entry name" value="EGF_CA"/>
    <property type="match status" value="13"/>
</dbReference>
<dbReference type="CDD" id="cd00110">
    <property type="entry name" value="LamG"/>
    <property type="match status" value="5"/>
</dbReference>
<dbReference type="FunFam" id="2.10.25.10:FF:000318">
    <property type="entry name" value="Eyes shut homolog"/>
    <property type="match status" value="1"/>
</dbReference>
<dbReference type="FunFam" id="2.10.25.10:FF:000425">
    <property type="entry name" value="Eyes shut homolog"/>
    <property type="match status" value="1"/>
</dbReference>
<dbReference type="FunFam" id="2.10.25.10:FF:000508">
    <property type="entry name" value="Eyes shut homolog"/>
    <property type="match status" value="1"/>
</dbReference>
<dbReference type="FunFam" id="2.10.25.10:FF:000669">
    <property type="entry name" value="Eyes shut homolog"/>
    <property type="match status" value="1"/>
</dbReference>
<dbReference type="FunFam" id="2.10.25.10:FF:000779">
    <property type="entry name" value="Eyes shut homolog"/>
    <property type="match status" value="1"/>
</dbReference>
<dbReference type="FunFam" id="2.60.120.200:FF:000231">
    <property type="entry name" value="Eyes shut homolog"/>
    <property type="match status" value="1"/>
</dbReference>
<dbReference type="FunFam" id="2.10.25.10:FF:000066">
    <property type="entry name" value="FAT atypical cadherin 4"/>
    <property type="match status" value="1"/>
</dbReference>
<dbReference type="FunFam" id="2.10.25.10:FF:000004">
    <property type="entry name" value="Neurogenic locus notch 1"/>
    <property type="match status" value="1"/>
</dbReference>
<dbReference type="FunFam" id="2.10.25.10:FF:000100">
    <property type="entry name" value="neurogenic locus notch homolog protein 3"/>
    <property type="match status" value="1"/>
</dbReference>
<dbReference type="FunFam" id="2.10.25.10:FF:000327">
    <property type="entry name" value="neurogenic locus notch homolog protein 4"/>
    <property type="match status" value="1"/>
</dbReference>
<dbReference type="FunFam" id="2.10.25.10:FF:000122">
    <property type="entry name" value="Protein crumbs homolog 2"/>
    <property type="match status" value="1"/>
</dbReference>
<dbReference type="FunFam" id="2.10.25.10:FF:000591">
    <property type="entry name" value="Protein eyes shut homolog"/>
    <property type="match status" value="1"/>
</dbReference>
<dbReference type="FunFam" id="2.10.25.10:FF:000676">
    <property type="entry name" value="Protein eyes shut homolog"/>
    <property type="match status" value="1"/>
</dbReference>
<dbReference type="FunFam" id="2.10.25.10:FF:000722">
    <property type="entry name" value="Protein eyes shut homolog"/>
    <property type="match status" value="1"/>
</dbReference>
<dbReference type="FunFam" id="2.10.25.10:FF:000747">
    <property type="entry name" value="Protein eyes shut homolog"/>
    <property type="match status" value="1"/>
</dbReference>
<dbReference type="FunFam" id="2.60.120.200:FF:000183">
    <property type="entry name" value="Protein eyes shut homolog"/>
    <property type="match status" value="1"/>
</dbReference>
<dbReference type="FunFam" id="2.60.120.200:FF:000190">
    <property type="entry name" value="Protein eyes shut homolog"/>
    <property type="match status" value="1"/>
</dbReference>
<dbReference type="FunFam" id="2.60.120.200:FF:000210">
    <property type="entry name" value="Protein eyes shut homolog"/>
    <property type="match status" value="1"/>
</dbReference>
<dbReference type="FunFam" id="2.60.120.200:FF:000218">
    <property type="entry name" value="Protein eyes shut homolog"/>
    <property type="match status" value="1"/>
</dbReference>
<dbReference type="FunFam" id="2.10.25.10:FF:000053">
    <property type="entry name" value="Slit guidance ligand 2"/>
    <property type="match status" value="1"/>
</dbReference>
<dbReference type="Gene3D" id="2.60.120.200">
    <property type="match status" value="5"/>
</dbReference>
<dbReference type="Gene3D" id="2.10.25.10">
    <property type="entry name" value="Laminin"/>
    <property type="match status" value="26"/>
</dbReference>
<dbReference type="InterPro" id="IPR013320">
    <property type="entry name" value="ConA-like_dom_sf"/>
</dbReference>
<dbReference type="InterPro" id="IPR001881">
    <property type="entry name" value="EGF-like_Ca-bd_dom"/>
</dbReference>
<dbReference type="InterPro" id="IPR013032">
    <property type="entry name" value="EGF-like_CS"/>
</dbReference>
<dbReference type="InterPro" id="IPR000742">
    <property type="entry name" value="EGF-like_dom"/>
</dbReference>
<dbReference type="InterPro" id="IPR000152">
    <property type="entry name" value="EGF-type_Asp/Asn_hydroxyl_site"/>
</dbReference>
<dbReference type="InterPro" id="IPR018097">
    <property type="entry name" value="EGF_Ca-bd_CS"/>
</dbReference>
<dbReference type="InterPro" id="IPR009030">
    <property type="entry name" value="Growth_fac_rcpt_cys_sf"/>
</dbReference>
<dbReference type="InterPro" id="IPR001791">
    <property type="entry name" value="Laminin_G"/>
</dbReference>
<dbReference type="InterPro" id="IPR051022">
    <property type="entry name" value="Notch_Cell-Fate_Det"/>
</dbReference>
<dbReference type="PANTHER" id="PTHR24049">
    <property type="entry name" value="CRUMBS FAMILY MEMBER"/>
    <property type="match status" value="1"/>
</dbReference>
<dbReference type="PANTHER" id="PTHR24049:SF22">
    <property type="entry name" value="DROSOPHILA CRUMBS HOMOLOG"/>
    <property type="match status" value="1"/>
</dbReference>
<dbReference type="Pfam" id="PF00008">
    <property type="entry name" value="EGF"/>
    <property type="match status" value="10"/>
</dbReference>
<dbReference type="Pfam" id="PF12661">
    <property type="entry name" value="hEGF"/>
    <property type="match status" value="4"/>
</dbReference>
<dbReference type="Pfam" id="PF02210">
    <property type="entry name" value="Laminin_G_2"/>
    <property type="match status" value="5"/>
</dbReference>
<dbReference type="SMART" id="SM00181">
    <property type="entry name" value="EGF"/>
    <property type="match status" value="27"/>
</dbReference>
<dbReference type="SMART" id="SM00179">
    <property type="entry name" value="EGF_CA"/>
    <property type="match status" value="22"/>
</dbReference>
<dbReference type="SMART" id="SM00282">
    <property type="entry name" value="LamG"/>
    <property type="match status" value="5"/>
</dbReference>
<dbReference type="SUPFAM" id="SSF49899">
    <property type="entry name" value="Concanavalin A-like lectins/glucanases"/>
    <property type="match status" value="5"/>
</dbReference>
<dbReference type="SUPFAM" id="SSF57196">
    <property type="entry name" value="EGF/Laminin"/>
    <property type="match status" value="11"/>
</dbReference>
<dbReference type="SUPFAM" id="SSF57184">
    <property type="entry name" value="Growth factor receptor domain"/>
    <property type="match status" value="2"/>
</dbReference>
<dbReference type="PROSITE" id="PS00010">
    <property type="entry name" value="ASX_HYDROXYL"/>
    <property type="match status" value="7"/>
</dbReference>
<dbReference type="PROSITE" id="PS00022">
    <property type="entry name" value="EGF_1"/>
    <property type="match status" value="21"/>
</dbReference>
<dbReference type="PROSITE" id="PS01186">
    <property type="entry name" value="EGF_2"/>
    <property type="match status" value="15"/>
</dbReference>
<dbReference type="PROSITE" id="PS50026">
    <property type="entry name" value="EGF_3"/>
    <property type="match status" value="27"/>
</dbReference>
<dbReference type="PROSITE" id="PS01187">
    <property type="entry name" value="EGF_CA"/>
    <property type="match status" value="6"/>
</dbReference>
<dbReference type="PROSITE" id="PS50025">
    <property type="entry name" value="LAM_G_DOMAIN"/>
    <property type="match status" value="5"/>
</dbReference>
<gene>
    <name type="primary">EYS</name>
    <name type="synonym">EGFL10</name>
    <name type="synonym">EGFL11</name>
    <name type="synonym">SPAM</name>
</gene>